<evidence type="ECO:0000255" key="1">
    <source>
        <dbReference type="HAMAP-Rule" id="MF_01969"/>
    </source>
</evidence>
<evidence type="ECO:0000269" key="2">
    <source>
    </source>
</evidence>
<evidence type="ECO:0000269" key="3">
    <source>
    </source>
</evidence>
<evidence type="ECO:0000303" key="4">
    <source>
    </source>
</evidence>
<evidence type="ECO:0000305" key="5">
    <source>
    </source>
</evidence>
<evidence type="ECO:0000305" key="6">
    <source>
    </source>
</evidence>
<evidence type="ECO:0007744" key="7">
    <source>
        <dbReference type="PDB" id="4COB"/>
    </source>
</evidence>
<evidence type="ECO:0007829" key="8">
    <source>
        <dbReference type="PDB" id="4COB"/>
    </source>
</evidence>
<proteinExistence type="evidence at protein level"/>
<sequence>MTSLRYWDISPALDPNTPTWPGDTPFQQEWAARLDEQCPVNVGRITLSPHTGAHVDGPLHYRADGLPIGQVPLDIYMGPCRVIHCIGANPLVTPEHLAGQLDDLPSRVLLRTFERVPANWPEGFCAIAPATIECLAERGVRLVGIDTPSLDPQHSKTLDAHHAVGRHGMAILEGVVLDDVPAGDYELLALPLKFTHLDASPVRAVLRALPTAE</sequence>
<keyword id="KW-0002">3D-structure</keyword>
<keyword id="KW-0378">Hydrolase</keyword>
<keyword id="KW-0479">Metal-binding</keyword>
<keyword id="KW-1185">Reference proteome</keyword>
<keyword id="KW-0823">Tryptophan catabolism</keyword>
<keyword id="KW-0862">Zinc</keyword>
<gene>
    <name evidence="1 4" type="primary">kynB</name>
    <name type="ordered locus">PA2081</name>
</gene>
<reference key="1">
    <citation type="journal article" date="2000" name="Nature">
        <title>Complete genome sequence of Pseudomonas aeruginosa PAO1, an opportunistic pathogen.</title>
        <authorList>
            <person name="Stover C.K."/>
            <person name="Pham X.-Q.T."/>
            <person name="Erwin A.L."/>
            <person name="Mizoguchi S.D."/>
            <person name="Warrener P."/>
            <person name="Hickey M.J."/>
            <person name="Brinkman F.S.L."/>
            <person name="Hufnagle W.O."/>
            <person name="Kowalik D.J."/>
            <person name="Lagrou M."/>
            <person name="Garber R.L."/>
            <person name="Goltry L."/>
            <person name="Tolentino E."/>
            <person name="Westbrock-Wadman S."/>
            <person name="Yuan Y."/>
            <person name="Brody L.L."/>
            <person name="Coulter S.N."/>
            <person name="Folger K.R."/>
            <person name="Kas A."/>
            <person name="Larbig K."/>
            <person name="Lim R.M."/>
            <person name="Smith K.A."/>
            <person name="Spencer D.H."/>
            <person name="Wong G.K.-S."/>
            <person name="Wu Z."/>
            <person name="Paulsen I.T."/>
            <person name="Reizer J."/>
            <person name="Saier M.H. Jr."/>
            <person name="Hancock R.E.W."/>
            <person name="Lory S."/>
            <person name="Olson M.V."/>
        </authorList>
    </citation>
    <scope>NUCLEOTIDE SEQUENCE [LARGE SCALE GENOMIC DNA]</scope>
    <source>
        <strain>ATCC 15692 / DSM 22644 / CIP 104116 / JCM 14847 / LMG 12228 / 1C / PRS 101 / PAO1</strain>
    </source>
</reference>
<reference key="2">
    <citation type="journal article" date="2003" name="FEMS Microbiol. Lett.">
        <title>Aerobic tryptophan degradation pathway in bacteria: novel kynurenine formamidase.</title>
        <authorList>
            <person name="Kurnasov O."/>
            <person name="Jablonski L."/>
            <person name="Polanuyer B."/>
            <person name="Dorrestein P."/>
            <person name="Begley T."/>
            <person name="Osterman A."/>
        </authorList>
    </citation>
    <scope>FUNCTION</scope>
    <scope>CATALYTIC ACTIVITY</scope>
    <scope>PATHWAY</scope>
    <source>
        <strain>ATCC 15692 / DSM 22644 / CIP 104116 / JCM 14847 / LMG 12228 / 1C / PRS 101 / PAO1</strain>
    </source>
</reference>
<reference key="3">
    <citation type="journal article" date="2014" name="Biochem. J.">
        <title>Structures of bacterial kynurenine formamidase reveal a crowded binuclear zinc catalytic site primed to generate a potent nucleophile.</title>
        <authorList>
            <person name="Diaz-Saez L."/>
            <person name="Srikannathasan V."/>
            <person name="Zoltner M."/>
            <person name="Hunter W.N."/>
        </authorList>
    </citation>
    <scope>X-RAY CRYSTALLOGRAPHY (2.37 ANGSTROMS) IN COMPLEX WITH ZINC IONS</scope>
    <scope>FUNCTION</scope>
    <scope>CATALYTIC ACTIVITY</scope>
    <scope>BIOPHYSICOCHEMICAL PROPERTIES</scope>
    <scope>ACTIVE SITE</scope>
    <scope>COFACTOR</scope>
    <scope>SUBUNIT</scope>
</reference>
<comment type="function">
    <text evidence="1 2 3">Catalyzes the hydrolysis of N-formyl-L-kynurenine to L-kynurenine, the second step in the kynurenine pathway of tryptophan degradation.</text>
</comment>
<comment type="catalytic activity">
    <reaction evidence="1 2 3">
        <text>N-formyl-L-kynurenine + H2O = L-kynurenine + formate + H(+)</text>
        <dbReference type="Rhea" id="RHEA:13009"/>
        <dbReference type="ChEBI" id="CHEBI:15377"/>
        <dbReference type="ChEBI" id="CHEBI:15378"/>
        <dbReference type="ChEBI" id="CHEBI:15740"/>
        <dbReference type="ChEBI" id="CHEBI:57959"/>
        <dbReference type="ChEBI" id="CHEBI:58629"/>
        <dbReference type="EC" id="3.5.1.9"/>
    </reaction>
</comment>
<comment type="cofactor">
    <cofactor evidence="1 3">
        <name>Zn(2+)</name>
        <dbReference type="ChEBI" id="CHEBI:29105"/>
    </cofactor>
    <text evidence="1 3">Binds 2 zinc ions per subunit.</text>
</comment>
<comment type="biophysicochemical properties">
    <kinetics>
        <KM evidence="3">0.98 mM for N-formyl-L-kynurenine</KM>
        <Vmax evidence="3">147.99 nmol/min/mg enzyme</Vmax>
        <text evidence="3">kcat is 114.21 sec(-1) for N-formyl-L-kynurenine as substrate.</text>
    </kinetics>
</comment>
<comment type="pathway">
    <text evidence="1 5">Amino-acid degradation; L-tryptophan degradation via kynurenine pathway; L-kynurenine from L-tryptophan: step 2/2.</text>
</comment>
<comment type="subunit">
    <text evidence="1 3">Homodimer.</text>
</comment>
<comment type="similarity">
    <text evidence="1">Belongs to the Cyclase 1 superfamily. KynB family.</text>
</comment>
<name>KYNB_PSEAE</name>
<feature type="chain" id="PRO_0000362130" description="Kynurenine formamidase">
    <location>
        <begin position="1"/>
        <end position="213"/>
    </location>
</feature>
<feature type="active site" description="Proton donor/acceptor" evidence="1 6">
    <location>
        <position position="60"/>
    </location>
</feature>
<feature type="binding site" evidence="1">
    <location>
        <position position="20"/>
    </location>
    <ligand>
        <name>substrate</name>
    </ligand>
</feature>
<feature type="binding site" evidence="1 3 7">
    <location>
        <position position="50"/>
    </location>
    <ligand>
        <name>Zn(2+)</name>
        <dbReference type="ChEBI" id="CHEBI:29105"/>
        <label>1</label>
    </ligand>
</feature>
<feature type="binding site" evidence="1 3 7">
    <location>
        <position position="54"/>
    </location>
    <ligand>
        <name>Zn(2+)</name>
        <dbReference type="ChEBI" id="CHEBI:29105"/>
        <label>1</label>
    </ligand>
</feature>
<feature type="binding site" evidence="1 3 7">
    <location>
        <position position="56"/>
    </location>
    <ligand>
        <name>Zn(2+)</name>
        <dbReference type="ChEBI" id="CHEBI:29105"/>
        <label>1</label>
    </ligand>
</feature>
<feature type="binding site" evidence="1 3 7">
    <location>
        <position position="56"/>
    </location>
    <ligand>
        <name>Zn(2+)</name>
        <dbReference type="ChEBI" id="CHEBI:29105"/>
        <label>2</label>
    </ligand>
</feature>
<feature type="binding site" evidence="1 3 7">
    <location>
        <position position="161"/>
    </location>
    <ligand>
        <name>Zn(2+)</name>
        <dbReference type="ChEBI" id="CHEBI:29105"/>
        <label>2</label>
    </ligand>
</feature>
<feature type="binding site" evidence="1 3 7">
    <location>
        <position position="173"/>
    </location>
    <ligand>
        <name>Zn(2+)</name>
        <dbReference type="ChEBI" id="CHEBI:29105"/>
        <label>1</label>
    </ligand>
</feature>
<feature type="binding site" evidence="1 3 7">
    <location>
        <position position="173"/>
    </location>
    <ligand>
        <name>Zn(2+)</name>
        <dbReference type="ChEBI" id="CHEBI:29105"/>
        <label>2</label>
    </ligand>
</feature>
<feature type="strand" evidence="8">
    <location>
        <begin position="6"/>
        <end position="8"/>
    </location>
</feature>
<feature type="strand" evidence="8">
    <location>
        <begin position="27"/>
        <end position="32"/>
    </location>
</feature>
<feature type="strand" evidence="8">
    <location>
        <begin position="35"/>
        <end position="37"/>
    </location>
</feature>
<feature type="strand" evidence="8">
    <location>
        <begin position="42"/>
        <end position="47"/>
    </location>
</feature>
<feature type="strand" evidence="8">
    <location>
        <begin position="51"/>
        <end position="56"/>
    </location>
</feature>
<feature type="helix" evidence="8">
    <location>
        <begin position="58"/>
        <end position="60"/>
    </location>
</feature>
<feature type="helix" evidence="8">
    <location>
        <begin position="68"/>
        <end position="70"/>
    </location>
</feature>
<feature type="helix" evidence="8">
    <location>
        <begin position="73"/>
        <end position="76"/>
    </location>
</feature>
<feature type="strand" evidence="8">
    <location>
        <begin position="77"/>
        <end position="84"/>
    </location>
</feature>
<feature type="strand" evidence="8">
    <location>
        <begin position="90"/>
        <end position="92"/>
    </location>
</feature>
<feature type="helix" evidence="8">
    <location>
        <begin position="94"/>
        <end position="97"/>
    </location>
</feature>
<feature type="strand" evidence="8">
    <location>
        <begin position="106"/>
        <end position="111"/>
    </location>
</feature>
<feature type="helix" evidence="8">
    <location>
        <begin position="129"/>
        <end position="137"/>
    </location>
</feature>
<feature type="strand" evidence="8">
    <location>
        <begin position="142"/>
        <end position="148"/>
    </location>
</feature>
<feature type="helix" evidence="8">
    <location>
        <begin position="159"/>
        <end position="166"/>
    </location>
</feature>
<feature type="strand" evidence="8">
    <location>
        <begin position="170"/>
        <end position="173"/>
    </location>
</feature>
<feature type="strand" evidence="8">
    <location>
        <begin position="182"/>
        <end position="188"/>
    </location>
</feature>
<feature type="strand" evidence="8">
    <location>
        <begin position="198"/>
        <end position="201"/>
    </location>
</feature>
<feature type="strand" evidence="8">
    <location>
        <begin position="205"/>
        <end position="207"/>
    </location>
</feature>
<organism>
    <name type="scientific">Pseudomonas aeruginosa (strain ATCC 15692 / DSM 22644 / CIP 104116 / JCM 14847 / LMG 12228 / 1C / PRS 101 / PAO1)</name>
    <dbReference type="NCBI Taxonomy" id="208964"/>
    <lineage>
        <taxon>Bacteria</taxon>
        <taxon>Pseudomonadati</taxon>
        <taxon>Pseudomonadota</taxon>
        <taxon>Gammaproteobacteria</taxon>
        <taxon>Pseudomonadales</taxon>
        <taxon>Pseudomonadaceae</taxon>
        <taxon>Pseudomonas</taxon>
    </lineage>
</organism>
<accession>Q9I234</accession>
<protein>
    <recommendedName>
        <fullName evidence="1 4">Kynurenine formamidase</fullName>
        <shortName evidence="1 4">KFA</shortName>
        <shortName evidence="1 4">KFase</shortName>
        <ecNumber evidence="1 2 3">3.5.1.9</ecNumber>
    </recommendedName>
    <alternativeName>
        <fullName evidence="1">Arylformamidase</fullName>
    </alternativeName>
    <alternativeName>
        <fullName evidence="1">N-formylkynurenine formamidase</fullName>
        <shortName evidence="1">FKF</shortName>
    </alternativeName>
</protein>
<dbReference type="EC" id="3.5.1.9" evidence="1 2 3"/>
<dbReference type="EMBL" id="AE004091">
    <property type="protein sequence ID" value="AAG05469.1"/>
    <property type="molecule type" value="Genomic_DNA"/>
</dbReference>
<dbReference type="PIR" id="E83386">
    <property type="entry name" value="E83386"/>
</dbReference>
<dbReference type="RefSeq" id="NP_250771.1">
    <property type="nucleotide sequence ID" value="NC_002516.2"/>
</dbReference>
<dbReference type="RefSeq" id="WP_003114853.1">
    <property type="nucleotide sequence ID" value="NZ_QZGE01000022.1"/>
</dbReference>
<dbReference type="PDB" id="4COB">
    <property type="method" value="X-ray"/>
    <property type="resolution" value="2.37 A"/>
    <property type="chains" value="A/B=1-213"/>
</dbReference>
<dbReference type="PDBsum" id="4COB"/>
<dbReference type="SMR" id="Q9I234"/>
<dbReference type="STRING" id="208964.PA2081"/>
<dbReference type="PaxDb" id="208964-PA2081"/>
<dbReference type="DNASU" id="878591"/>
<dbReference type="GeneID" id="878591"/>
<dbReference type="KEGG" id="pae:PA2081"/>
<dbReference type="PATRIC" id="fig|208964.12.peg.2173"/>
<dbReference type="PseudoCAP" id="PA2081"/>
<dbReference type="HOGENOM" id="CLU_030671_3_1_6"/>
<dbReference type="InParanoid" id="Q9I234"/>
<dbReference type="OrthoDB" id="7067800at2"/>
<dbReference type="PhylomeDB" id="Q9I234"/>
<dbReference type="BioCyc" id="PAER208964:G1FZ6-2119-MONOMER"/>
<dbReference type="BRENDA" id="3.5.1.9">
    <property type="organism ID" value="5087"/>
</dbReference>
<dbReference type="UniPathway" id="UPA00333">
    <property type="reaction ID" value="UER00454"/>
</dbReference>
<dbReference type="EvolutionaryTrace" id="Q9I234"/>
<dbReference type="Proteomes" id="UP000002438">
    <property type="component" value="Chromosome"/>
</dbReference>
<dbReference type="GO" id="GO:0004061">
    <property type="term" value="F:arylformamidase activity"/>
    <property type="evidence" value="ECO:0000314"/>
    <property type="project" value="UniProtKB"/>
</dbReference>
<dbReference type="GO" id="GO:0004328">
    <property type="term" value="F:formamidase activity"/>
    <property type="evidence" value="ECO:0007669"/>
    <property type="project" value="InterPro"/>
</dbReference>
<dbReference type="GO" id="GO:0008270">
    <property type="term" value="F:zinc ion binding"/>
    <property type="evidence" value="ECO:0000314"/>
    <property type="project" value="UniProtKB"/>
</dbReference>
<dbReference type="GO" id="GO:0043420">
    <property type="term" value="P:anthranilate metabolic process"/>
    <property type="evidence" value="ECO:0000317"/>
    <property type="project" value="UniProtKB"/>
</dbReference>
<dbReference type="GO" id="GO:0019441">
    <property type="term" value="P:L-tryptophan catabolic process to kynurenine"/>
    <property type="evidence" value="ECO:0000315"/>
    <property type="project" value="PseudoCAP"/>
</dbReference>
<dbReference type="FunFam" id="3.50.30.50:FF:000001">
    <property type="entry name" value="Kynurenine formamidase"/>
    <property type="match status" value="1"/>
</dbReference>
<dbReference type="Gene3D" id="3.50.30.50">
    <property type="entry name" value="Putative cyclase"/>
    <property type="match status" value="1"/>
</dbReference>
<dbReference type="HAMAP" id="MF_01969">
    <property type="entry name" value="KynB"/>
    <property type="match status" value="1"/>
</dbReference>
<dbReference type="InterPro" id="IPR007325">
    <property type="entry name" value="KFase/CYL"/>
</dbReference>
<dbReference type="InterPro" id="IPR037175">
    <property type="entry name" value="KFase_sf"/>
</dbReference>
<dbReference type="InterPro" id="IPR017484">
    <property type="entry name" value="Kynurenine_formamidase_bac"/>
</dbReference>
<dbReference type="NCBIfam" id="TIGR03035">
    <property type="entry name" value="trp_arylform"/>
    <property type="match status" value="1"/>
</dbReference>
<dbReference type="PANTHER" id="PTHR31118">
    <property type="entry name" value="CYCLASE-LIKE PROTEIN 2"/>
    <property type="match status" value="1"/>
</dbReference>
<dbReference type="PANTHER" id="PTHR31118:SF32">
    <property type="entry name" value="KYNURENINE FORMAMIDASE"/>
    <property type="match status" value="1"/>
</dbReference>
<dbReference type="Pfam" id="PF04199">
    <property type="entry name" value="Cyclase"/>
    <property type="match status" value="1"/>
</dbReference>
<dbReference type="SUPFAM" id="SSF102198">
    <property type="entry name" value="Putative cyclase"/>
    <property type="match status" value="1"/>
</dbReference>